<proteinExistence type="inferred from homology"/>
<feature type="chain" id="PRO_0000347576" description="Alanine--tRNA ligase">
    <location>
        <begin position="1"/>
        <end position="865"/>
    </location>
</feature>
<feature type="binding site" evidence="1">
    <location>
        <position position="552"/>
    </location>
    <ligand>
        <name>Zn(2+)</name>
        <dbReference type="ChEBI" id="CHEBI:29105"/>
    </ligand>
</feature>
<feature type="binding site" evidence="1">
    <location>
        <position position="556"/>
    </location>
    <ligand>
        <name>Zn(2+)</name>
        <dbReference type="ChEBI" id="CHEBI:29105"/>
    </ligand>
</feature>
<feature type="binding site" evidence="1">
    <location>
        <position position="654"/>
    </location>
    <ligand>
        <name>Zn(2+)</name>
        <dbReference type="ChEBI" id="CHEBI:29105"/>
    </ligand>
</feature>
<feature type="binding site" evidence="1">
    <location>
        <position position="658"/>
    </location>
    <ligand>
        <name>Zn(2+)</name>
        <dbReference type="ChEBI" id="CHEBI:29105"/>
    </ligand>
</feature>
<name>SYA_COXBN</name>
<organism>
    <name type="scientific">Coxiella burnetii (strain Dugway 5J108-111)</name>
    <dbReference type="NCBI Taxonomy" id="434922"/>
    <lineage>
        <taxon>Bacteria</taxon>
        <taxon>Pseudomonadati</taxon>
        <taxon>Pseudomonadota</taxon>
        <taxon>Gammaproteobacteria</taxon>
        <taxon>Legionellales</taxon>
        <taxon>Coxiellaceae</taxon>
        <taxon>Coxiella</taxon>
    </lineage>
</organism>
<sequence>MNSNQLRETFLNYFKQLDHEVVPGSSLIPENDPTLLFTNAGMVQFKDVFLGVETRPYQRAVSIQPCMRAGGKHNDLENVGYTARHHTFFEMLGNFSFGDYFKRDAIKFAWDFLTNVLKLPPQRLWVTVFQDDFESESIWLKEMKINPERFSRCGEKDNFWQMRDTGPCGPCTEIFYDHGPTISGGPPGSAEADGDRYVEIWNLVFMQYNRDAKGNLLPLAKPSVDTGMGLERLAAVMQGVHDNYDIDLFQYLLKALRTLLKTEDLHNTSMRVIVDHIRSVAFLIADGVIPSNEGRGYVLRRIIRRAVRHGYKLGQEEPFFYQLTKPLVEEMGGAYPLLRKSQALIEQTIKQEEIQFSNTLTKGLKILDHEMAGLPSRQIPGNLIFQLYDTYGFPPDLTADIARERDFVMDYAGFDKAMERQREQSQQAHQFVANYAQKASIGGETQFVGYETLNSQANVISLLQNDQPINRLNESEKGVVVLDRTPFYAESGGQVGDQGFLYFEKGSFRVKDTKKQGDIYLHIGEMLQGHLNVKDKVRAEVDVSRFDIMRNHSATHLLHEALRRVLGERVMQKGSLVEAKRLRFDFSHAKPLTPEELQAVERLVNQQIQANLLSTIEVMTPEEAKKKGALALFGERYGKEVRVLEMGDFSTEICGGTHTERTGEIGLFKIVSESGCAAGIRRIEALTGKAALDYIESAEQQLRSLSDLLKTNRKNLAAKLSQILEDHRKLEKELAKLKQRLASQQLESLINQVVDVHDIRTLAIRLEAVDRETLRAIVDQLKQKLGKAAIVLATIEEGRIQLVAGVTKNCLEHFNATELLAPIAEKVGGRSGGRPDLAQGAGERPENLEAALAAVPKWIEKKLKE</sequence>
<comment type="function">
    <text evidence="1">Catalyzes the attachment of alanine to tRNA(Ala) in a two-step reaction: alanine is first activated by ATP to form Ala-AMP and then transferred to the acceptor end of tRNA(Ala). Also edits incorrectly charged Ser-tRNA(Ala) and Gly-tRNA(Ala) via its editing domain.</text>
</comment>
<comment type="catalytic activity">
    <reaction evidence="1">
        <text>tRNA(Ala) + L-alanine + ATP = L-alanyl-tRNA(Ala) + AMP + diphosphate</text>
        <dbReference type="Rhea" id="RHEA:12540"/>
        <dbReference type="Rhea" id="RHEA-COMP:9657"/>
        <dbReference type="Rhea" id="RHEA-COMP:9923"/>
        <dbReference type="ChEBI" id="CHEBI:30616"/>
        <dbReference type="ChEBI" id="CHEBI:33019"/>
        <dbReference type="ChEBI" id="CHEBI:57972"/>
        <dbReference type="ChEBI" id="CHEBI:78442"/>
        <dbReference type="ChEBI" id="CHEBI:78497"/>
        <dbReference type="ChEBI" id="CHEBI:456215"/>
        <dbReference type="EC" id="6.1.1.7"/>
    </reaction>
</comment>
<comment type="cofactor">
    <cofactor evidence="1">
        <name>Zn(2+)</name>
        <dbReference type="ChEBI" id="CHEBI:29105"/>
    </cofactor>
    <text evidence="1">Binds 1 zinc ion per subunit.</text>
</comment>
<comment type="subcellular location">
    <subcellularLocation>
        <location evidence="1">Cytoplasm</location>
    </subcellularLocation>
</comment>
<comment type="domain">
    <text evidence="1">Consists of three domains; the N-terminal catalytic domain, the editing domain and the C-terminal C-Ala domain. The editing domain removes incorrectly charged amino acids, while the C-Ala domain, along with tRNA(Ala), serves as a bridge to cooperatively bring together the editing and aminoacylation centers thus stimulating deacylation of misacylated tRNAs.</text>
</comment>
<comment type="similarity">
    <text evidence="1">Belongs to the class-II aminoacyl-tRNA synthetase family.</text>
</comment>
<accession>A9KG28</accession>
<keyword id="KW-0030">Aminoacyl-tRNA synthetase</keyword>
<keyword id="KW-0067">ATP-binding</keyword>
<keyword id="KW-0963">Cytoplasm</keyword>
<keyword id="KW-0436">Ligase</keyword>
<keyword id="KW-0479">Metal-binding</keyword>
<keyword id="KW-0547">Nucleotide-binding</keyword>
<keyword id="KW-0648">Protein biosynthesis</keyword>
<keyword id="KW-0694">RNA-binding</keyword>
<keyword id="KW-0820">tRNA-binding</keyword>
<keyword id="KW-0862">Zinc</keyword>
<reference key="1">
    <citation type="journal article" date="2009" name="Infect. Immun.">
        <title>Comparative genomics reveal extensive transposon-mediated genomic plasticity and diversity among potential effector proteins within the genus Coxiella.</title>
        <authorList>
            <person name="Beare P.A."/>
            <person name="Unsworth N."/>
            <person name="Andoh M."/>
            <person name="Voth D.E."/>
            <person name="Omsland A."/>
            <person name="Gilk S.D."/>
            <person name="Williams K.P."/>
            <person name="Sobral B.W."/>
            <person name="Kupko J.J. III"/>
            <person name="Porcella S.F."/>
            <person name="Samuel J.E."/>
            <person name="Heinzen R.A."/>
        </authorList>
    </citation>
    <scope>NUCLEOTIDE SEQUENCE [LARGE SCALE GENOMIC DNA]</scope>
    <source>
        <strain>Dugway 5J108-111</strain>
    </source>
</reference>
<evidence type="ECO:0000255" key="1">
    <source>
        <dbReference type="HAMAP-Rule" id="MF_00036"/>
    </source>
</evidence>
<protein>
    <recommendedName>
        <fullName evidence="1">Alanine--tRNA ligase</fullName>
        <ecNumber evidence="1">6.1.1.7</ecNumber>
    </recommendedName>
    <alternativeName>
        <fullName evidence="1">Alanyl-tRNA synthetase</fullName>
        <shortName evidence="1">AlaRS</shortName>
    </alternativeName>
</protein>
<dbReference type="EC" id="6.1.1.7" evidence="1"/>
<dbReference type="EMBL" id="CP000733">
    <property type="protein sequence ID" value="ABS77417.1"/>
    <property type="molecule type" value="Genomic_DNA"/>
</dbReference>
<dbReference type="RefSeq" id="WP_010957972.1">
    <property type="nucleotide sequence ID" value="NC_009727.1"/>
</dbReference>
<dbReference type="SMR" id="A9KG28"/>
<dbReference type="KEGG" id="cbd:CBUD_0990"/>
<dbReference type="HOGENOM" id="CLU_004485_1_1_6"/>
<dbReference type="Proteomes" id="UP000008555">
    <property type="component" value="Chromosome"/>
</dbReference>
<dbReference type="GO" id="GO:0005829">
    <property type="term" value="C:cytosol"/>
    <property type="evidence" value="ECO:0007669"/>
    <property type="project" value="TreeGrafter"/>
</dbReference>
<dbReference type="GO" id="GO:0004813">
    <property type="term" value="F:alanine-tRNA ligase activity"/>
    <property type="evidence" value="ECO:0007669"/>
    <property type="project" value="UniProtKB-UniRule"/>
</dbReference>
<dbReference type="GO" id="GO:0002161">
    <property type="term" value="F:aminoacyl-tRNA deacylase activity"/>
    <property type="evidence" value="ECO:0007669"/>
    <property type="project" value="TreeGrafter"/>
</dbReference>
<dbReference type="GO" id="GO:0005524">
    <property type="term" value="F:ATP binding"/>
    <property type="evidence" value="ECO:0007669"/>
    <property type="project" value="UniProtKB-UniRule"/>
</dbReference>
<dbReference type="GO" id="GO:0000049">
    <property type="term" value="F:tRNA binding"/>
    <property type="evidence" value="ECO:0007669"/>
    <property type="project" value="UniProtKB-KW"/>
</dbReference>
<dbReference type="GO" id="GO:0008270">
    <property type="term" value="F:zinc ion binding"/>
    <property type="evidence" value="ECO:0007669"/>
    <property type="project" value="UniProtKB-UniRule"/>
</dbReference>
<dbReference type="GO" id="GO:0006419">
    <property type="term" value="P:alanyl-tRNA aminoacylation"/>
    <property type="evidence" value="ECO:0007669"/>
    <property type="project" value="UniProtKB-UniRule"/>
</dbReference>
<dbReference type="GO" id="GO:0045892">
    <property type="term" value="P:negative regulation of DNA-templated transcription"/>
    <property type="evidence" value="ECO:0007669"/>
    <property type="project" value="TreeGrafter"/>
</dbReference>
<dbReference type="CDD" id="cd00673">
    <property type="entry name" value="AlaRS_core"/>
    <property type="match status" value="1"/>
</dbReference>
<dbReference type="FunFam" id="2.40.30.130:FF:000001">
    <property type="entry name" value="Alanine--tRNA ligase"/>
    <property type="match status" value="1"/>
</dbReference>
<dbReference type="FunFam" id="3.10.310.40:FF:000001">
    <property type="entry name" value="Alanine--tRNA ligase"/>
    <property type="match status" value="1"/>
</dbReference>
<dbReference type="FunFam" id="3.30.54.20:FF:000001">
    <property type="entry name" value="Alanine--tRNA ligase"/>
    <property type="match status" value="1"/>
</dbReference>
<dbReference type="FunFam" id="3.30.930.10:FF:000004">
    <property type="entry name" value="Alanine--tRNA ligase"/>
    <property type="match status" value="1"/>
</dbReference>
<dbReference type="FunFam" id="3.30.980.10:FF:000004">
    <property type="entry name" value="Alanine--tRNA ligase, cytoplasmic"/>
    <property type="match status" value="1"/>
</dbReference>
<dbReference type="Gene3D" id="2.40.30.130">
    <property type="match status" value="1"/>
</dbReference>
<dbReference type="Gene3D" id="3.10.310.40">
    <property type="match status" value="1"/>
</dbReference>
<dbReference type="Gene3D" id="3.30.54.20">
    <property type="match status" value="1"/>
</dbReference>
<dbReference type="Gene3D" id="6.10.250.550">
    <property type="match status" value="1"/>
</dbReference>
<dbReference type="Gene3D" id="3.30.930.10">
    <property type="entry name" value="Bira Bifunctional Protein, Domain 2"/>
    <property type="match status" value="1"/>
</dbReference>
<dbReference type="Gene3D" id="3.30.980.10">
    <property type="entry name" value="Threonyl-trna Synthetase, Chain A, domain 2"/>
    <property type="match status" value="1"/>
</dbReference>
<dbReference type="HAMAP" id="MF_00036_B">
    <property type="entry name" value="Ala_tRNA_synth_B"/>
    <property type="match status" value="1"/>
</dbReference>
<dbReference type="InterPro" id="IPR045864">
    <property type="entry name" value="aa-tRNA-synth_II/BPL/LPL"/>
</dbReference>
<dbReference type="InterPro" id="IPR002318">
    <property type="entry name" value="Ala-tRNA-lgiase_IIc"/>
</dbReference>
<dbReference type="InterPro" id="IPR018162">
    <property type="entry name" value="Ala-tRNA-ligase_IIc_anticod-bd"/>
</dbReference>
<dbReference type="InterPro" id="IPR018165">
    <property type="entry name" value="Ala-tRNA-synth_IIc_core"/>
</dbReference>
<dbReference type="InterPro" id="IPR018164">
    <property type="entry name" value="Ala-tRNA-synth_IIc_N"/>
</dbReference>
<dbReference type="InterPro" id="IPR050058">
    <property type="entry name" value="Ala-tRNA_ligase"/>
</dbReference>
<dbReference type="InterPro" id="IPR023033">
    <property type="entry name" value="Ala_tRNA_ligase_euk/bac"/>
</dbReference>
<dbReference type="InterPro" id="IPR003156">
    <property type="entry name" value="DHHA1_dom"/>
</dbReference>
<dbReference type="InterPro" id="IPR018163">
    <property type="entry name" value="Thr/Ala-tRNA-synth_IIc_edit"/>
</dbReference>
<dbReference type="InterPro" id="IPR009000">
    <property type="entry name" value="Transl_B-barrel_sf"/>
</dbReference>
<dbReference type="InterPro" id="IPR012947">
    <property type="entry name" value="tRNA_SAD"/>
</dbReference>
<dbReference type="NCBIfam" id="TIGR00344">
    <property type="entry name" value="alaS"/>
    <property type="match status" value="1"/>
</dbReference>
<dbReference type="PANTHER" id="PTHR11777:SF9">
    <property type="entry name" value="ALANINE--TRNA LIGASE, CYTOPLASMIC"/>
    <property type="match status" value="1"/>
</dbReference>
<dbReference type="PANTHER" id="PTHR11777">
    <property type="entry name" value="ALANYL-TRNA SYNTHETASE"/>
    <property type="match status" value="1"/>
</dbReference>
<dbReference type="Pfam" id="PF02272">
    <property type="entry name" value="DHHA1"/>
    <property type="match status" value="1"/>
</dbReference>
<dbReference type="Pfam" id="PF01411">
    <property type="entry name" value="tRNA-synt_2c"/>
    <property type="match status" value="1"/>
</dbReference>
<dbReference type="Pfam" id="PF07973">
    <property type="entry name" value="tRNA_SAD"/>
    <property type="match status" value="1"/>
</dbReference>
<dbReference type="PRINTS" id="PR00980">
    <property type="entry name" value="TRNASYNTHALA"/>
</dbReference>
<dbReference type="SMART" id="SM00863">
    <property type="entry name" value="tRNA_SAD"/>
    <property type="match status" value="1"/>
</dbReference>
<dbReference type="SUPFAM" id="SSF55681">
    <property type="entry name" value="Class II aaRS and biotin synthetases"/>
    <property type="match status" value="1"/>
</dbReference>
<dbReference type="SUPFAM" id="SSF101353">
    <property type="entry name" value="Putative anticodon-binding domain of alanyl-tRNA synthetase (AlaRS)"/>
    <property type="match status" value="1"/>
</dbReference>
<dbReference type="SUPFAM" id="SSF55186">
    <property type="entry name" value="ThrRS/AlaRS common domain"/>
    <property type="match status" value="1"/>
</dbReference>
<dbReference type="SUPFAM" id="SSF50447">
    <property type="entry name" value="Translation proteins"/>
    <property type="match status" value="1"/>
</dbReference>
<dbReference type="PROSITE" id="PS50860">
    <property type="entry name" value="AA_TRNA_LIGASE_II_ALA"/>
    <property type="match status" value="1"/>
</dbReference>
<gene>
    <name evidence="1" type="primary">alaS</name>
    <name type="ordered locus">CBUD_0990</name>
</gene>